<feature type="chain" id="PRO_0000047602" description="Zinc finger protein 469">
    <location>
        <begin position="1"/>
        <end position="3953"/>
    </location>
</feature>
<feature type="zinc finger region" description="C2H2-type 1" evidence="1">
    <location>
        <begin position="2472"/>
        <end position="2498"/>
    </location>
</feature>
<feature type="zinc finger region" description="C2H2-type 2" evidence="1">
    <location>
        <begin position="3115"/>
        <end position="3137"/>
    </location>
</feature>
<feature type="zinc finger region" description="C2H2-type 3" evidence="1">
    <location>
        <begin position="3337"/>
        <end position="3359"/>
    </location>
</feature>
<feature type="zinc finger region" description="C2H2-type 4" evidence="1">
    <location>
        <begin position="3365"/>
        <end position="3388"/>
    </location>
</feature>
<feature type="zinc finger region" description="C2H2-type 5; degenerate" evidence="1">
    <location>
        <begin position="3418"/>
        <end position="3442"/>
    </location>
</feature>
<feature type="region of interest" description="Disordered" evidence="2">
    <location>
        <begin position="1"/>
        <end position="274"/>
    </location>
</feature>
<feature type="region of interest" description="Disordered" evidence="2">
    <location>
        <begin position="313"/>
        <end position="465"/>
    </location>
</feature>
<feature type="region of interest" description="Disordered" evidence="2">
    <location>
        <begin position="512"/>
        <end position="672"/>
    </location>
</feature>
<feature type="region of interest" description="Disordered" evidence="2">
    <location>
        <begin position="763"/>
        <end position="784"/>
    </location>
</feature>
<feature type="region of interest" description="Disordered" evidence="2">
    <location>
        <begin position="869"/>
        <end position="1383"/>
    </location>
</feature>
<feature type="region of interest" description="Disordered" evidence="2">
    <location>
        <begin position="1400"/>
        <end position="1461"/>
    </location>
</feature>
<feature type="region of interest" description="Disordered" evidence="2">
    <location>
        <begin position="1575"/>
        <end position="1610"/>
    </location>
</feature>
<feature type="region of interest" description="Disordered" evidence="2">
    <location>
        <begin position="1703"/>
        <end position="1864"/>
    </location>
</feature>
<feature type="region of interest" description="Disordered" evidence="2">
    <location>
        <begin position="1884"/>
        <end position="1947"/>
    </location>
</feature>
<feature type="region of interest" description="Disordered" evidence="2">
    <location>
        <begin position="1991"/>
        <end position="2030"/>
    </location>
</feature>
<feature type="region of interest" description="Disordered" evidence="2">
    <location>
        <begin position="2070"/>
        <end position="2700"/>
    </location>
</feature>
<feature type="region of interest" description="Disordered" evidence="2">
    <location>
        <begin position="2716"/>
        <end position="2915"/>
    </location>
</feature>
<feature type="region of interest" description="Disordered" evidence="2">
    <location>
        <begin position="3001"/>
        <end position="3036"/>
    </location>
</feature>
<feature type="region of interest" description="Disordered" evidence="2">
    <location>
        <begin position="3072"/>
        <end position="3110"/>
    </location>
</feature>
<feature type="region of interest" description="Disordered" evidence="2">
    <location>
        <begin position="3232"/>
        <end position="3322"/>
    </location>
</feature>
<feature type="region of interest" description="Disordered" evidence="2">
    <location>
        <begin position="3448"/>
        <end position="3501"/>
    </location>
</feature>
<feature type="region of interest" description="Disordered" evidence="2">
    <location>
        <begin position="3518"/>
        <end position="3559"/>
    </location>
</feature>
<feature type="region of interest" description="Disordered" evidence="2">
    <location>
        <begin position="3576"/>
        <end position="3925"/>
    </location>
</feature>
<feature type="compositionally biased region" description="Polar residues" evidence="2">
    <location>
        <begin position="187"/>
        <end position="198"/>
    </location>
</feature>
<feature type="compositionally biased region" description="Pro residues" evidence="2">
    <location>
        <begin position="202"/>
        <end position="211"/>
    </location>
</feature>
<feature type="compositionally biased region" description="Pro residues" evidence="2">
    <location>
        <begin position="324"/>
        <end position="335"/>
    </location>
</feature>
<feature type="compositionally biased region" description="Low complexity" evidence="2">
    <location>
        <begin position="603"/>
        <end position="623"/>
    </location>
</feature>
<feature type="compositionally biased region" description="Pro residues" evidence="2">
    <location>
        <begin position="768"/>
        <end position="780"/>
    </location>
</feature>
<feature type="compositionally biased region" description="Pro residues" evidence="2">
    <location>
        <begin position="896"/>
        <end position="911"/>
    </location>
</feature>
<feature type="compositionally biased region" description="Basic residues" evidence="2">
    <location>
        <begin position="944"/>
        <end position="953"/>
    </location>
</feature>
<feature type="compositionally biased region" description="Gly residues" evidence="2">
    <location>
        <begin position="963"/>
        <end position="975"/>
    </location>
</feature>
<feature type="compositionally biased region" description="Basic and acidic residues" evidence="2">
    <location>
        <begin position="981"/>
        <end position="991"/>
    </location>
</feature>
<feature type="compositionally biased region" description="Low complexity" evidence="2">
    <location>
        <begin position="1005"/>
        <end position="1017"/>
    </location>
</feature>
<feature type="compositionally biased region" description="Basic residues" evidence="2">
    <location>
        <begin position="1025"/>
        <end position="1042"/>
    </location>
</feature>
<feature type="compositionally biased region" description="Basic residues" evidence="2">
    <location>
        <begin position="1058"/>
        <end position="1070"/>
    </location>
</feature>
<feature type="compositionally biased region" description="Basic and acidic residues" evidence="2">
    <location>
        <begin position="1082"/>
        <end position="1093"/>
    </location>
</feature>
<feature type="compositionally biased region" description="Acidic residues" evidence="2">
    <location>
        <begin position="1094"/>
        <end position="1103"/>
    </location>
</feature>
<feature type="compositionally biased region" description="Basic and acidic residues" evidence="2">
    <location>
        <begin position="1120"/>
        <end position="1137"/>
    </location>
</feature>
<feature type="compositionally biased region" description="Low complexity" evidence="2">
    <location>
        <begin position="1158"/>
        <end position="1177"/>
    </location>
</feature>
<feature type="compositionally biased region" description="Basic and acidic residues" evidence="2">
    <location>
        <begin position="1213"/>
        <end position="1229"/>
    </location>
</feature>
<feature type="compositionally biased region" description="Polar residues" evidence="2">
    <location>
        <begin position="1278"/>
        <end position="1290"/>
    </location>
</feature>
<feature type="compositionally biased region" description="Polar residues" evidence="2">
    <location>
        <begin position="1333"/>
        <end position="1350"/>
    </location>
</feature>
<feature type="compositionally biased region" description="Basic and acidic residues" evidence="2">
    <location>
        <begin position="1577"/>
        <end position="1595"/>
    </location>
</feature>
<feature type="compositionally biased region" description="Polar residues" evidence="2">
    <location>
        <begin position="1991"/>
        <end position="2005"/>
    </location>
</feature>
<feature type="compositionally biased region" description="Polar residues" evidence="2">
    <location>
        <begin position="2014"/>
        <end position="2024"/>
    </location>
</feature>
<feature type="compositionally biased region" description="Basic and acidic residues" evidence="2">
    <location>
        <begin position="2243"/>
        <end position="2262"/>
    </location>
</feature>
<feature type="compositionally biased region" description="Polar residues" evidence="2">
    <location>
        <begin position="2409"/>
        <end position="2435"/>
    </location>
</feature>
<feature type="compositionally biased region" description="Basic residues" evidence="2">
    <location>
        <begin position="2488"/>
        <end position="2498"/>
    </location>
</feature>
<feature type="compositionally biased region" description="Low complexity" evidence="2">
    <location>
        <begin position="2506"/>
        <end position="2521"/>
    </location>
</feature>
<feature type="compositionally biased region" description="Basic and acidic residues" evidence="2">
    <location>
        <begin position="2534"/>
        <end position="2546"/>
    </location>
</feature>
<feature type="compositionally biased region" description="Low complexity" evidence="2">
    <location>
        <begin position="2565"/>
        <end position="2574"/>
    </location>
</feature>
<feature type="compositionally biased region" description="Basic and acidic residues" evidence="2">
    <location>
        <begin position="2592"/>
        <end position="2631"/>
    </location>
</feature>
<feature type="compositionally biased region" description="Basic residues" evidence="2">
    <location>
        <begin position="2632"/>
        <end position="2642"/>
    </location>
</feature>
<feature type="compositionally biased region" description="Low complexity" evidence="2">
    <location>
        <begin position="2664"/>
        <end position="2676"/>
    </location>
</feature>
<feature type="compositionally biased region" description="Basic and acidic residues" evidence="2">
    <location>
        <begin position="2777"/>
        <end position="2787"/>
    </location>
</feature>
<feature type="compositionally biased region" description="Low complexity" evidence="2">
    <location>
        <begin position="2805"/>
        <end position="2816"/>
    </location>
</feature>
<feature type="compositionally biased region" description="Basic residues" evidence="2">
    <location>
        <begin position="2869"/>
        <end position="2879"/>
    </location>
</feature>
<feature type="compositionally biased region" description="Low complexity" evidence="2">
    <location>
        <begin position="3095"/>
        <end position="3105"/>
    </location>
</feature>
<feature type="compositionally biased region" description="Basic and acidic residues" evidence="2">
    <location>
        <begin position="3260"/>
        <end position="3272"/>
    </location>
</feature>
<feature type="compositionally biased region" description="Pro residues" evidence="2">
    <location>
        <begin position="3302"/>
        <end position="3314"/>
    </location>
</feature>
<feature type="compositionally biased region" description="Low complexity" evidence="2">
    <location>
        <begin position="3584"/>
        <end position="3602"/>
    </location>
</feature>
<feature type="compositionally biased region" description="Basic and acidic residues" evidence="2">
    <location>
        <begin position="3633"/>
        <end position="3651"/>
    </location>
</feature>
<feature type="compositionally biased region" description="Low complexity" evidence="2">
    <location>
        <begin position="3728"/>
        <end position="3741"/>
    </location>
</feature>
<feature type="compositionally biased region" description="Low complexity" evidence="2">
    <location>
        <begin position="3749"/>
        <end position="3759"/>
    </location>
</feature>
<feature type="compositionally biased region" description="Basic and acidic residues" evidence="2">
    <location>
        <begin position="3876"/>
        <end position="3892"/>
    </location>
</feature>
<feature type="compositionally biased region" description="Basic and acidic residues" evidence="2">
    <location>
        <begin position="3915"/>
        <end position="3925"/>
    </location>
</feature>
<feature type="sequence variant" id="VAR_061949" description="In dbSNP:rs11648572.">
    <original>S</original>
    <variation>P</variation>
    <location>
        <position position="357"/>
    </location>
</feature>
<feature type="sequence variant" id="VAR_033285" description="In dbSNP:rs11640794.">
    <original>R</original>
    <variation>S</variation>
    <location>
        <position position="366"/>
    </location>
</feature>
<feature type="sequence variant" id="VAR_033286" description="In dbSNP:rs7197071.">
    <original>K</original>
    <variation>E</variation>
    <location>
        <position position="1190"/>
    </location>
</feature>
<feature type="sequence variant" id="VAR_033287" description="In dbSNP:rs4782300.">
    <original>P</original>
    <variation>L</variation>
    <location>
        <position position="1448"/>
    </location>
</feature>
<feature type="sequence variant" id="VAR_033288" description="In dbSNP:rs13334190.">
    <original>R</original>
    <variation>K</variation>
    <location>
        <position position="2157"/>
    </location>
</feature>
<feature type="sequence variant" id="VAR_033289" description="In dbSNP:rs12598474." evidence="3">
    <original>G</original>
    <variation>R</variation>
    <location>
        <position position="2386"/>
    </location>
</feature>
<feature type="sequence variant" id="VAR_033290" description="In dbSNP:rs3812956." evidence="3">
    <original>L</original>
    <variation>Q</variation>
    <location>
        <position position="2698"/>
    </location>
</feature>
<feature type="sequence variant" id="VAR_033291" description="In dbSNP:rs3812955.">
    <original>A</original>
    <variation>T</variation>
    <location>
        <position position="2738"/>
    </location>
</feature>
<feature type="sequence variant" id="VAR_033292" description="In dbSNP:rs3812954.">
    <original>D</original>
    <variation>V</variation>
    <location>
        <position position="2777"/>
    </location>
</feature>
<feature type="sequence variant" id="VAR_033293" description="In dbSNP:rs1983014." evidence="3">
    <original>H</original>
    <variation>R</variation>
    <location>
        <position position="2876"/>
    </location>
</feature>
<feature type="sequence variant" id="VAR_033294" description="In dbSNP:rs1105066." evidence="3">
    <original>E</original>
    <variation>Q</variation>
    <location>
        <position position="3658"/>
    </location>
</feature>
<feature type="sequence variant" id="VAR_033295" description="In dbSNP:rs904783.">
    <original>A</original>
    <variation>T</variation>
    <location>
        <position position="3664"/>
    </location>
</feature>
<reference key="1">
    <citation type="journal article" date="2004" name="Nature">
        <title>The sequence and analysis of duplication-rich human chromosome 16.</title>
        <authorList>
            <person name="Martin J."/>
            <person name="Han C."/>
            <person name="Gordon L.A."/>
            <person name="Terry A."/>
            <person name="Prabhakar S."/>
            <person name="She X."/>
            <person name="Xie G."/>
            <person name="Hellsten U."/>
            <person name="Chan Y.M."/>
            <person name="Altherr M."/>
            <person name="Couronne O."/>
            <person name="Aerts A."/>
            <person name="Bajorek E."/>
            <person name="Black S."/>
            <person name="Blumer H."/>
            <person name="Branscomb E."/>
            <person name="Brown N.C."/>
            <person name="Bruno W.J."/>
            <person name="Buckingham J.M."/>
            <person name="Callen D.F."/>
            <person name="Campbell C.S."/>
            <person name="Campbell M.L."/>
            <person name="Campbell E.W."/>
            <person name="Caoile C."/>
            <person name="Challacombe J.F."/>
            <person name="Chasteen L.A."/>
            <person name="Chertkov O."/>
            <person name="Chi H.C."/>
            <person name="Christensen M."/>
            <person name="Clark L.M."/>
            <person name="Cohn J.D."/>
            <person name="Denys M."/>
            <person name="Detter J.C."/>
            <person name="Dickson M."/>
            <person name="Dimitrijevic-Bussod M."/>
            <person name="Escobar J."/>
            <person name="Fawcett J.J."/>
            <person name="Flowers D."/>
            <person name="Fotopulos D."/>
            <person name="Glavina T."/>
            <person name="Gomez M."/>
            <person name="Gonzales E."/>
            <person name="Goodstein D."/>
            <person name="Goodwin L.A."/>
            <person name="Grady D.L."/>
            <person name="Grigoriev I."/>
            <person name="Groza M."/>
            <person name="Hammon N."/>
            <person name="Hawkins T."/>
            <person name="Haydu L."/>
            <person name="Hildebrand C.E."/>
            <person name="Huang W."/>
            <person name="Israni S."/>
            <person name="Jett J."/>
            <person name="Jewett P.B."/>
            <person name="Kadner K."/>
            <person name="Kimball H."/>
            <person name="Kobayashi A."/>
            <person name="Krawczyk M.-C."/>
            <person name="Leyba T."/>
            <person name="Longmire J.L."/>
            <person name="Lopez F."/>
            <person name="Lou Y."/>
            <person name="Lowry S."/>
            <person name="Ludeman T."/>
            <person name="Manohar C.F."/>
            <person name="Mark G.A."/>
            <person name="McMurray K.L."/>
            <person name="Meincke L.J."/>
            <person name="Morgan J."/>
            <person name="Moyzis R.K."/>
            <person name="Mundt M.O."/>
            <person name="Munk A.C."/>
            <person name="Nandkeshwar R.D."/>
            <person name="Pitluck S."/>
            <person name="Pollard M."/>
            <person name="Predki P."/>
            <person name="Parson-Quintana B."/>
            <person name="Ramirez L."/>
            <person name="Rash S."/>
            <person name="Retterer J."/>
            <person name="Ricke D.O."/>
            <person name="Robinson D.L."/>
            <person name="Rodriguez A."/>
            <person name="Salamov A."/>
            <person name="Saunders E.H."/>
            <person name="Scott D."/>
            <person name="Shough T."/>
            <person name="Stallings R.L."/>
            <person name="Stalvey M."/>
            <person name="Sutherland R.D."/>
            <person name="Tapia R."/>
            <person name="Tesmer J.G."/>
            <person name="Thayer N."/>
            <person name="Thompson L.S."/>
            <person name="Tice H."/>
            <person name="Torney D.C."/>
            <person name="Tran-Gyamfi M."/>
            <person name="Tsai M."/>
            <person name="Ulanovsky L.E."/>
            <person name="Ustaszewska A."/>
            <person name="Vo N."/>
            <person name="White P.S."/>
            <person name="Williams A.L."/>
            <person name="Wills P.L."/>
            <person name="Wu J.-R."/>
            <person name="Wu K."/>
            <person name="Yang J."/>
            <person name="DeJong P."/>
            <person name="Bruce D."/>
            <person name="Doggett N.A."/>
            <person name="Deaven L."/>
            <person name="Schmutz J."/>
            <person name="Grimwood J."/>
            <person name="Richardson P."/>
            <person name="Rokhsar D.S."/>
            <person name="Eichler E.E."/>
            <person name="Gilna P."/>
            <person name="Lucas S.M."/>
            <person name="Myers R.M."/>
            <person name="Rubin E.M."/>
            <person name="Pennacchio L.A."/>
        </authorList>
    </citation>
    <scope>NUCLEOTIDE SEQUENCE [LARGE SCALE GENOMIC DNA]</scope>
</reference>
<reference key="2">
    <citation type="journal article" date="2001" name="DNA Res.">
        <title>Prediction of the coding sequences of unidentified human genes. XX. The complete sequences of 100 new cDNA clones from brain which code for large proteins in vitro.</title>
        <authorList>
            <person name="Nagase T."/>
            <person name="Nakayama M."/>
            <person name="Nakajima D."/>
            <person name="Kikuno R."/>
            <person name="Ohara O."/>
        </authorList>
    </citation>
    <scope>NUCLEOTIDE SEQUENCE [LARGE SCALE MRNA] OF 1485-3953</scope>
    <scope>VARIANTS ARG-2386; GLN-2698; ARG-2876 AND GLN-3658</scope>
    <source>
        <tissue>Brain</tissue>
    </source>
</reference>
<reference key="3">
    <citation type="submission" date="2005-08" db="EMBL/GenBank/DDBJ databases">
        <authorList>
            <person name="Ohara O."/>
            <person name="Nagase T."/>
            <person name="Kikuno R."/>
        </authorList>
    </citation>
    <scope>SEQUENCE REVISION</scope>
</reference>
<reference key="4">
    <citation type="journal article" date="2008" name="Am. J. Hum. Genet.">
        <title>Deleterious mutations in the Zinc-Finger 469 gene cause brittle cornea syndrome.</title>
        <authorList>
            <person name="Abu A."/>
            <person name="Frydman M."/>
            <person name="Marek D."/>
            <person name="Pras E."/>
            <person name="Nir U."/>
            <person name="Reznik-Wolf H."/>
            <person name="Pras E."/>
        </authorList>
    </citation>
    <scope>INVOLVEMENT IN BCS1</scope>
    <scope>TISSUE SPECIFICITY</scope>
</reference>
<keyword id="KW-0238">DNA-binding</keyword>
<keyword id="KW-0479">Metal-binding</keyword>
<keyword id="KW-0539">Nucleus</keyword>
<keyword id="KW-1267">Proteomics identification</keyword>
<keyword id="KW-1185">Reference proteome</keyword>
<keyword id="KW-0677">Repeat</keyword>
<keyword id="KW-0804">Transcription</keyword>
<keyword id="KW-0805">Transcription regulation</keyword>
<keyword id="KW-0862">Zinc</keyword>
<keyword id="KW-0863">Zinc-finger</keyword>
<proteinExistence type="evidence at protein level"/>
<gene>
    <name type="primary">ZNF469</name>
    <name type="synonym">KIAA1858</name>
</gene>
<sequence length="3953" mass="413295">MPGERPRGAPPPTMTGDLQPRQVASSPGHPSQPPLEDNTPATRTTKGAREAGGQAQAMELPEAQPRQARDGELKPPSLRGQAPSSTPGKRGSPQTPPGRSPLQAPSRLAGRAEGSPPQRYILGIASSRTKPTLDETPENPQLEAAQLPEVDTPQGPGTGAPLRPGLPRTEAQPAAEELGFHRCFQEPPSSFTSTNYTSPSATPRPPAPGPPQSRGTSPLQPGSYPEYQASGADSWPPAAENSFPGANFGVPPAEPEPIPKGSRPGGSPRGVSFQFPFPALHGASTKPFPADVAGHAFTNGPLVFAFHQPQGAWPEEAVGTGPAYPLPTQPAPSPLPCYQGQPGGLNRHSDLSGALSSPGAAHSAPRPFSDSLHKSLTKILPERPPSAQDGLGSTRGPPSSLPQRHFPGQAYRASGVDTSPGPPDTELAAPGPPPARLPQLWDPTAAPYPTPPGGPLAATRSMFFNGQPSPGQRLCLPQSAPLPWPQVLPTARPSPHGMEMLSRLPFPAGGPEWQGGSQGALGTAGKTPGPREKLPAVRSSQGGSPALFTYNGMTDPGAQPLFFGVAQPQVSPHGTPSLPPPRVVGASPSESPLPSPATNTAGSTCSSLSPMSSSPANPSSEESQLPGPLGPSAFFHPPTHPQETGSPFPSPEPPHSLPTHYQPEPAKAFPFPADGLGAEGAFQCLEETPFPHEGPEVGRGGLQGFPRAPPPYPTHHFSLSSASLDQLDVLLTCRQCDRNYSSLAAFLAHRQFCGLLLARAKDGHQRSPGPPGLPSPPAAPRVPADAHAGLLSHAKTFLLAGDAQAEGKDDPLRTGFLPSLAATPFPLPASDLDMEDDAKLDSLITEALNGMEYQSDNPEIDSSFIDVFADEEPSGPRGPSSGHPLKSKAGVTPESKAPPPLPAATPDPQTPRPGDRGCPARGRPKTRSLGLAPTEADAPSQGRQQRRGKQLKLFRKDLDSGGAAEGSGSGGGGRASGLRPRRNDGLGERPPPRPRRPRTQAPGSRADPAPRVPRAAALPEETRSSRRRRLPPRKDPRKRKARGGAWGKELILKIVQQKNRRHRRLGRRAGRCGSLAAGRPRPGAEDRRLREYDFASESEEDEQPPPRGPGFRGRRGRGEKRKEVELTQGPREDEPQKPRKAARQEAGGDGAPANPEEPGGSRPGPGRSPQARGPSRSLETGAAAREGGPKCADRPSVAPKDPLQVPTNTETSEETRPSLDFPQEAKEPETAEESAPDSTEFTEALRSPPAACAGEMGASPGLLIPEQPPPSRHDTGTPKPSGSLANTAPHGSSPTPGVGSLLGGPGGTQAPVSHNSKDPPARQPGEFLAPVANPSSTACPKPSVLSSKISSFGCDPAGFNRDPLGVPVAKKGPQPYSSPHSELFLGPKDLAGCFLEELHPKPSARDAPPASSSCLCQDGEDAGSLEPQLPRSPPGTAETEPGRAASPPTLESSSLFPDLPVDRFDPPLYGSLSANRDSGLPFACADPPQKTVPSDPPYPSFLLLEEVSPMLPSHFPDLSGGKVLSKTCPPERTVVPGAAPSLPGKGSGCSVALMSHLSEDELEIQKLVTELESQLQRSKDTRGAPRELAEAESVGRVELGTGTEPPSQRRTCQATVPHEDTFSAADLTRVGESTAHREGAESAVATVEAVQGRPGGTWPCPASFHPGHAALLPCAQEDLVSGAPFSPRGANFHFQPVQKAGASKTGLCQAEGDSRPPQDVCLPEPSKQPGPQLDAGSLAKCSPDQELSFPKNKEAASSQESEDSLRLLPCEQRGGFLPEPGTADQPHRGAPAPEAFGSPAVHLAPDLAFQGDGAPPLDATWPFGASPSHAAQGHSAGRAGGHLHPTAGRPGFEGNEFAPAGASSLTAPRGREAWLVPVPSPACVSNTHPSRRSQDPALSPPIRQLQLPGPGVAKSKDGILGLQELTPAAQSPPRVNPSGLEGGTVEGGKVACGPAQGSPGGVQVTTLPAVAGHQLGLEADGHWGLLGQAEKTQGQGTANQLQPENGVSPGGTDNHASVNASPKTALTGPTEGAVLLEKCKGSRAAMSLQEEAEPTPSPPSPNRESLALALTAAHSRSGSEGRTPERASSPGLNKPLLATGDSPAPSVGDLAACAPSPTSAAHMPCSLGPLPREDPLTSPSRAQGGLGGQLPASPSCRDPPGPQQLLACSPAWAPLEEADGVQATTDTGAEDSPVAPPSLTTSPCDPKEALAGCLLQGEGSPLEDPSSWPPGSVSAVTCTHSGDTPKDSTLRIPEDSRKEKLWESPGRATSPPLAGAVSPSVAVRATGLSSTPTGDEAQAGRGLPGPDPQSRGAPPHTNPDRMPRGHSSYSPSNTARLGHREGQAVTAVPTEPPTLQGAGPDSPACLEGEMGTSSKEPEDPGTPETGRSGATKMPRVTCPSTGLGLGRTTAPSSTASDFQSDSPQSHRNASHQTPQGDPLGPQDLKQRSRGYKKKPASTENGQWKGQAPHGPVTCEVCAASFRSGPGLSRHKARKHRPHPGAPAEPSPAALPAQQPLEPLAQKCQPPRKKSHRVSGKERPNHSRGDPSHVTQPPPAQGSKEVLRAPGSPHSQQLHPPSPTEHEVDVKTPASKPRPDQAREDELHPKQAEKREGRRWRREPTVDSPSHSEGKSNKKRGKLRGRRLREESILPVSADVISDGRGSRPSPAMASYAASPSHCLSVEGGPEADGEQPPRLATLGPGVMEGAAETDQEALCAGETGAQKPPGDRMLCPGRMDGAALGEQPTGQKGASARGFWGPRETKALGVCKESGSEPAEDSSRAHSRSEEGVWEENTPPLGPLGFPETSSSPADSTTSSCLQGLPDNPDTQGGVQGPEGPTPDASGSSAKDPPSLFDDEVSFSQLFPPGGRLTRKRNPHVYGKRCEKPVLPLPTQPSFEEGGDPTLGPARLPTDLSDSSSLCLCHEDPWEDEDPAGLPESFLLDGFLNSRVPGIDPWAPGLSLWALEPSREAGAEKLPSHCPEDDRPEAIPELHMVPAAWRGLEMPAPADDSSSSLGDVSPEPPSLERERCDGGLPGNTHLLPLRATDFEVLSTKFEMQDLCFLGPFEDPVGLPGPSFLDFEGTASSQGPQSRRTEEAAGAGRAQGRGRPAKGRRASYKCKVCFQRFRSLGELDLHKLAHTPAPPPTCYMCVERRFGSRELLRGHLQERHAQSKAGPWACGMCLKEVADVWMYNEHLREHAVRFARRGQARRSLGDLPGGLEGSSAVAHLLNSITEPAPKHHRGKRSAGKAAGSPGDPWGQEGEAKKDSPGERAKPRARSTPSNPDGAATPDSASATALADAGSPGPPRTTPSPSPDPWAGGEPLLQATPVHEACKDPSRDCHHCGKRFPKPFKLQRHLAVHSPQRVYLCPRCPRVYPEHGELLAHLGGAHGLLERPELQHTPLYACELCATVMRIIKKSFACSSCNYTFAKKEQFDRHMNKHLRGGRQPFAFRGVRRPGAPGQKARALEGTLPSKRRRVAMPGSAPGPGEDRPPPRGSSPILSEGSLPALLHLCSEVAPSTTKGWPETLERPVDPVTHPIRGCELPSNHQECPPPSLSPFPAALADGRGDCALDGALERPENEASPGSPGPLLQQALPLGASLPRPGARGQDAEGKRAPLVFSGKRRAPGARGRCAPDHFQEDHLLQKEKEVSSSHMVSEGGPRGAFHKGSATKPAGCQSSSKDRSAASTPSKALKFPVHPRKAVGSLAPGELARGTENGMKPATPKAKPGPSSQGSGSPRPGTKTGGGSQPQPASGQLQSETATTPAKPSFPSRSPAPERLPARAQAKSCTKGPREAGEQGPHGSLGPKEKGESSTKRKKGQVPGPARSESVGSFGRAPSAPDKPPRTPRKQATPSRVLPTKPKPNSQNKPRPPPSEQRKAEPGHTQRKDRLGKAFPQGRPLLRPPKRGTAVHGAEPAEPHTHRTAEAQSDLLSQLFGQRLTGFKIPLKKDASE</sequence>
<comment type="function">
    <text>May be involved in transcriptional regulation.</text>
</comment>
<comment type="subcellular location">
    <subcellularLocation>
        <location evidence="5">Nucleus</location>
    </subcellularLocation>
</comment>
<comment type="tissue specificity">
    <text evidence="4">Detected in cornea, sclera, skin fibroblasts and striated muscle.</text>
</comment>
<comment type="disease" evidence="4">
    <disease id="DI-00441">
        <name>Brittle cornea syndrome 1</name>
        <acronym>BCS1</acronym>
        <description>A disorder characterized by extreme corneal thinning resulting in corneal rupture after minor trauma, blue sclerae, keratoconus or keratoglobus, hyperelasticity of the skin, and hypermobility of the joints. It shares some features with, but is much less severe than, the ocular form of Ehlers-Danlos syndrome (EDS6).</description>
        <dbReference type="MIM" id="229200"/>
    </disease>
    <text>The disease is caused by variants affecting the gene represented in this entry.</text>
</comment>
<comment type="similarity">
    <text evidence="5">Belongs to the krueppel C2H2-type zinc-finger protein family.</text>
</comment>
<accession>Q96JG9</accession>
<accession>H3BS19</accession>
<evidence type="ECO:0000255" key="1">
    <source>
        <dbReference type="PROSITE-ProRule" id="PRU00042"/>
    </source>
</evidence>
<evidence type="ECO:0000256" key="2">
    <source>
        <dbReference type="SAM" id="MobiDB-lite"/>
    </source>
</evidence>
<evidence type="ECO:0000269" key="3">
    <source>
    </source>
</evidence>
<evidence type="ECO:0000269" key="4">
    <source>
    </source>
</evidence>
<evidence type="ECO:0000305" key="5"/>
<name>ZN469_HUMAN</name>
<organism>
    <name type="scientific">Homo sapiens</name>
    <name type="common">Human</name>
    <dbReference type="NCBI Taxonomy" id="9606"/>
    <lineage>
        <taxon>Eukaryota</taxon>
        <taxon>Metazoa</taxon>
        <taxon>Chordata</taxon>
        <taxon>Craniata</taxon>
        <taxon>Vertebrata</taxon>
        <taxon>Euteleostomi</taxon>
        <taxon>Mammalia</taxon>
        <taxon>Eutheria</taxon>
        <taxon>Euarchontoglires</taxon>
        <taxon>Primates</taxon>
        <taxon>Haplorrhini</taxon>
        <taxon>Catarrhini</taxon>
        <taxon>Hominidae</taxon>
        <taxon>Homo</taxon>
    </lineage>
</organism>
<protein>
    <recommendedName>
        <fullName>Zinc finger protein 469</fullName>
    </recommendedName>
</protein>
<dbReference type="EMBL" id="AC132804">
    <property type="status" value="NOT_ANNOTATED_CDS"/>
    <property type="molecule type" value="Genomic_DNA"/>
</dbReference>
<dbReference type="EMBL" id="AC135049">
    <property type="status" value="NOT_ANNOTATED_CDS"/>
    <property type="molecule type" value="Genomic_DNA"/>
</dbReference>
<dbReference type="EMBL" id="KF456226">
    <property type="status" value="NOT_ANNOTATED_CDS"/>
    <property type="molecule type" value="Genomic_DNA"/>
</dbReference>
<dbReference type="EMBL" id="AB058761">
    <property type="protein sequence ID" value="BAB47487.2"/>
    <property type="molecule type" value="mRNA"/>
</dbReference>
<dbReference type="CCDS" id="CCDS92205.1"/>
<dbReference type="RefSeq" id="NP_001354553.1">
    <property type="nucleotide sequence ID" value="NM_001367624.2"/>
</dbReference>
<dbReference type="RefSeq" id="XP_016879273.1">
    <property type="nucleotide sequence ID" value="XM_017023784.1"/>
</dbReference>
<dbReference type="RefSeq" id="XP_016879274.1">
    <property type="nucleotide sequence ID" value="XM_017023785.1"/>
</dbReference>
<dbReference type="RefSeq" id="XP_047290766.1">
    <property type="nucleotide sequence ID" value="XM_047434810.1"/>
</dbReference>
<dbReference type="BioGRID" id="124156">
    <property type="interactions" value="8"/>
</dbReference>
<dbReference type="FunCoup" id="Q96JG9">
    <property type="interactions" value="310"/>
</dbReference>
<dbReference type="IntAct" id="Q96JG9">
    <property type="interactions" value="5"/>
</dbReference>
<dbReference type="STRING" id="9606.ENSP00000456500"/>
<dbReference type="GlyGen" id="Q96JG9">
    <property type="glycosylation" value="10 sites, 2 O-linked glycans (2 sites)"/>
</dbReference>
<dbReference type="iPTMnet" id="Q96JG9"/>
<dbReference type="PhosphoSitePlus" id="Q96JG9"/>
<dbReference type="BioMuta" id="ZNF469"/>
<dbReference type="DMDM" id="158518658"/>
<dbReference type="jPOST" id="Q96JG9"/>
<dbReference type="MassIVE" id="Q96JG9"/>
<dbReference type="PaxDb" id="9606-ENSP00000402343"/>
<dbReference type="PeptideAtlas" id="Q96JG9"/>
<dbReference type="ProteomicsDB" id="42228"/>
<dbReference type="ProteomicsDB" id="76962"/>
<dbReference type="Antibodypedia" id="77234">
    <property type="antibodies" value="6 antibodies from 4 providers"/>
</dbReference>
<dbReference type="Ensembl" id="ENST00000565624.3">
    <property type="protein sequence ID" value="ENSP00000456500.2"/>
    <property type="gene ID" value="ENSG00000225614.4"/>
</dbReference>
<dbReference type="GeneID" id="84627"/>
<dbReference type="MANE-Select" id="ENST00000565624.3">
    <property type="protein sequence ID" value="ENSP00000456500.2"/>
    <property type="RefSeq nucleotide sequence ID" value="NM_001367624.2"/>
    <property type="RefSeq protein sequence ID" value="NP_001354553.1"/>
</dbReference>
<dbReference type="UCSC" id="uc002fku.2">
    <property type="organism name" value="human"/>
</dbReference>
<dbReference type="AGR" id="HGNC:23216"/>
<dbReference type="DisGeNET" id="84627"/>
<dbReference type="GeneCards" id="ZNF469"/>
<dbReference type="HGNC" id="HGNC:23216">
    <property type="gene designation" value="ZNF469"/>
</dbReference>
<dbReference type="HPA" id="ENSG00000225614">
    <property type="expression patterns" value="Tissue enhanced (ovary)"/>
</dbReference>
<dbReference type="MalaCards" id="ZNF469"/>
<dbReference type="MIM" id="229200">
    <property type="type" value="phenotype"/>
</dbReference>
<dbReference type="MIM" id="612078">
    <property type="type" value="gene"/>
</dbReference>
<dbReference type="neXtProt" id="NX_Q96JG9"/>
<dbReference type="OpenTargets" id="ENSG00000225614"/>
<dbReference type="Orphanet" id="90354">
    <property type="disease" value="Brittle cornea syndrome"/>
</dbReference>
<dbReference type="PharmGKB" id="PA134861470"/>
<dbReference type="VEuPathDB" id="HostDB:ENSG00000225614"/>
<dbReference type="eggNOG" id="KOG1721">
    <property type="taxonomic scope" value="Eukaryota"/>
</dbReference>
<dbReference type="GeneTree" id="ENSGT00530000065415"/>
<dbReference type="HOGENOM" id="CLU_000186_0_0_1"/>
<dbReference type="InParanoid" id="Q96JG9"/>
<dbReference type="OMA" id="MPWQQIH"/>
<dbReference type="OrthoDB" id="9897853at2759"/>
<dbReference type="PAN-GO" id="Q96JG9">
    <property type="GO annotations" value="0 GO annotations based on evolutionary models"/>
</dbReference>
<dbReference type="PhylomeDB" id="Q96JG9"/>
<dbReference type="PathwayCommons" id="Q96JG9"/>
<dbReference type="SignaLink" id="Q96JG9"/>
<dbReference type="BioGRID-ORCS" id="84627">
    <property type="hits" value="29 hits in 1115 CRISPR screens"/>
</dbReference>
<dbReference type="ChiTaRS" id="ZNF469">
    <property type="organism name" value="human"/>
</dbReference>
<dbReference type="GenomeRNAi" id="84627"/>
<dbReference type="Pharos" id="Q96JG9">
    <property type="development level" value="Tbio"/>
</dbReference>
<dbReference type="PRO" id="PR:Q96JG9"/>
<dbReference type="Proteomes" id="UP000005640">
    <property type="component" value="Chromosome 16"/>
</dbReference>
<dbReference type="RNAct" id="Q96JG9">
    <property type="molecule type" value="protein"/>
</dbReference>
<dbReference type="Bgee" id="ENSG00000225614">
    <property type="expression patterns" value="Expressed in tibia and 166 other cell types or tissues"/>
</dbReference>
<dbReference type="ExpressionAtlas" id="Q96JG9">
    <property type="expression patterns" value="baseline and differential"/>
</dbReference>
<dbReference type="GO" id="GO:0005634">
    <property type="term" value="C:nucleus"/>
    <property type="evidence" value="ECO:0007669"/>
    <property type="project" value="UniProtKB-SubCell"/>
</dbReference>
<dbReference type="GO" id="GO:0003677">
    <property type="term" value="F:DNA binding"/>
    <property type="evidence" value="ECO:0007669"/>
    <property type="project" value="UniProtKB-KW"/>
</dbReference>
<dbReference type="GO" id="GO:0003700">
    <property type="term" value="F:DNA-binding transcription factor activity"/>
    <property type="evidence" value="ECO:0000303"/>
    <property type="project" value="ARUK-UCL"/>
</dbReference>
<dbReference type="GO" id="GO:0008270">
    <property type="term" value="F:zinc ion binding"/>
    <property type="evidence" value="ECO:0007669"/>
    <property type="project" value="UniProtKB-KW"/>
</dbReference>
<dbReference type="GO" id="GO:0000122">
    <property type="term" value="P:negative regulation of transcription by RNA polymerase II"/>
    <property type="evidence" value="ECO:0000315"/>
    <property type="project" value="ARUK-UCL"/>
</dbReference>
<dbReference type="GO" id="GO:1903053">
    <property type="term" value="P:regulation of extracellular matrix organization"/>
    <property type="evidence" value="ECO:0000315"/>
    <property type="project" value="ARUK-UCL"/>
</dbReference>
<dbReference type="Gene3D" id="3.30.160.60">
    <property type="entry name" value="Classic Zinc Finger"/>
    <property type="match status" value="2"/>
</dbReference>
<dbReference type="InterPro" id="IPR039270">
    <property type="entry name" value="ZNF469"/>
</dbReference>
<dbReference type="InterPro" id="IPR036236">
    <property type="entry name" value="Znf_C2H2_sf"/>
</dbReference>
<dbReference type="InterPro" id="IPR013087">
    <property type="entry name" value="Znf_C2H2_type"/>
</dbReference>
<dbReference type="PANTHER" id="PTHR21465">
    <property type="entry name" value="ZINC FINGER PROTEIN 469"/>
    <property type="match status" value="1"/>
</dbReference>
<dbReference type="PANTHER" id="PTHR21465:SF2">
    <property type="entry name" value="ZINC FINGER PROTEIN 469"/>
    <property type="match status" value="1"/>
</dbReference>
<dbReference type="Pfam" id="PF00096">
    <property type="entry name" value="zf-C2H2"/>
    <property type="match status" value="1"/>
</dbReference>
<dbReference type="SMART" id="SM00355">
    <property type="entry name" value="ZnF_C2H2"/>
    <property type="match status" value="8"/>
</dbReference>
<dbReference type="SUPFAM" id="SSF57667">
    <property type="entry name" value="beta-beta-alpha zinc fingers"/>
    <property type="match status" value="1"/>
</dbReference>
<dbReference type="PROSITE" id="PS00028">
    <property type="entry name" value="ZINC_FINGER_C2H2_1"/>
    <property type="match status" value="6"/>
</dbReference>
<dbReference type="PROSITE" id="PS50157">
    <property type="entry name" value="ZINC_FINGER_C2H2_2"/>
    <property type="match status" value="3"/>
</dbReference>